<gene>
    <name evidence="1" type="primary">clpX</name>
    <name type="ordered locus">Teth514_2300</name>
</gene>
<keyword id="KW-0067">ATP-binding</keyword>
<keyword id="KW-0143">Chaperone</keyword>
<keyword id="KW-0479">Metal-binding</keyword>
<keyword id="KW-0547">Nucleotide-binding</keyword>
<keyword id="KW-0862">Zinc</keyword>
<organism>
    <name type="scientific">Thermoanaerobacter sp. (strain X514)</name>
    <dbReference type="NCBI Taxonomy" id="399726"/>
    <lineage>
        <taxon>Bacteria</taxon>
        <taxon>Bacillati</taxon>
        <taxon>Bacillota</taxon>
        <taxon>Clostridia</taxon>
        <taxon>Thermoanaerobacterales</taxon>
        <taxon>Thermoanaerobacteraceae</taxon>
        <taxon>Thermoanaerobacter</taxon>
    </lineage>
</organism>
<proteinExistence type="inferred from homology"/>
<sequence>MVKYDNQKQLKCSFCGKTQDQVKRLVAGPGVYICDECIELCQEIINEEFEEDIDMGIGELPKPKEIKEFLDQYVIGQEKAKKALAVAVYNHYKRINSRIKPDDVELQKSNILLLGPTGSGKTLLAQTLAKLLNVPFAIADATSLTEAGYVGEDVENILLKLIQAADYDIEKAEKGIIYIDEIDKIARKSENPSITRDVSGEGVQQALLKILEGTIANVPPQGGRKHPHQEFIQIDTTNILFICGGAFEGIEKIIESRIGKKSLGFGAEVQSRKEKDLSEILSHIMPQDLLKFGMIPEFIGRVPIVVTLDPLSKDDLVRILTEPKNALTKQYEKLFELDGVKLEFDKKALGLIADMALERKTGARGLRAILEEIMLDVMYEIPSSDNIEKCIITEETVLKKAPPTLVYSDAQKAKKKIKKTESVS</sequence>
<name>CLPX_THEPX</name>
<reference key="1">
    <citation type="submission" date="2008-01" db="EMBL/GenBank/DDBJ databases">
        <title>Complete sequence of Thermoanaerobacter sp. X514.</title>
        <authorList>
            <consortium name="US DOE Joint Genome Institute"/>
            <person name="Copeland A."/>
            <person name="Lucas S."/>
            <person name="Lapidus A."/>
            <person name="Barry K."/>
            <person name="Glavina del Rio T."/>
            <person name="Dalin E."/>
            <person name="Tice H."/>
            <person name="Pitluck S."/>
            <person name="Bruce D."/>
            <person name="Goodwin L."/>
            <person name="Saunders E."/>
            <person name="Brettin T."/>
            <person name="Detter J.C."/>
            <person name="Han C."/>
            <person name="Schmutz J."/>
            <person name="Larimer F."/>
            <person name="Land M."/>
            <person name="Hauser L."/>
            <person name="Kyrpides N."/>
            <person name="Kim E."/>
            <person name="Hemme C."/>
            <person name="Fields M.W."/>
            <person name="He Z."/>
            <person name="Zhou J."/>
            <person name="Richardson P."/>
        </authorList>
    </citation>
    <scope>NUCLEOTIDE SEQUENCE [LARGE SCALE GENOMIC DNA]</scope>
    <source>
        <strain>X514</strain>
    </source>
</reference>
<comment type="function">
    <text evidence="1">ATP-dependent specificity component of the Clp protease. It directs the protease to specific substrates. Can perform chaperone functions in the absence of ClpP.</text>
</comment>
<comment type="subunit">
    <text evidence="1">Component of the ClpX-ClpP complex. Forms a hexameric ring that, in the presence of ATP, binds to fourteen ClpP subunits assembled into a disk-like structure with a central cavity, resembling the structure of eukaryotic proteasomes.</text>
</comment>
<comment type="similarity">
    <text evidence="1">Belongs to the ClpX chaperone family.</text>
</comment>
<evidence type="ECO:0000255" key="1">
    <source>
        <dbReference type="HAMAP-Rule" id="MF_00175"/>
    </source>
</evidence>
<evidence type="ECO:0000255" key="2">
    <source>
        <dbReference type="PROSITE-ProRule" id="PRU01250"/>
    </source>
</evidence>
<feature type="chain" id="PRO_1000098012" description="ATP-dependent Clp protease ATP-binding subunit ClpX">
    <location>
        <begin position="1"/>
        <end position="424"/>
    </location>
</feature>
<feature type="domain" description="ClpX-type ZB" evidence="2">
    <location>
        <begin position="1"/>
        <end position="53"/>
    </location>
</feature>
<feature type="binding site" evidence="2">
    <location>
        <position position="12"/>
    </location>
    <ligand>
        <name>Zn(2+)</name>
        <dbReference type="ChEBI" id="CHEBI:29105"/>
    </ligand>
</feature>
<feature type="binding site" evidence="2">
    <location>
        <position position="15"/>
    </location>
    <ligand>
        <name>Zn(2+)</name>
        <dbReference type="ChEBI" id="CHEBI:29105"/>
    </ligand>
</feature>
<feature type="binding site" evidence="2">
    <location>
        <position position="34"/>
    </location>
    <ligand>
        <name>Zn(2+)</name>
        <dbReference type="ChEBI" id="CHEBI:29105"/>
    </ligand>
</feature>
<feature type="binding site" evidence="2">
    <location>
        <position position="37"/>
    </location>
    <ligand>
        <name>Zn(2+)</name>
        <dbReference type="ChEBI" id="CHEBI:29105"/>
    </ligand>
</feature>
<feature type="binding site" evidence="1">
    <location>
        <begin position="116"/>
        <end position="123"/>
    </location>
    <ligand>
        <name>ATP</name>
        <dbReference type="ChEBI" id="CHEBI:30616"/>
    </ligand>
</feature>
<protein>
    <recommendedName>
        <fullName evidence="1">ATP-dependent Clp protease ATP-binding subunit ClpX</fullName>
    </recommendedName>
</protein>
<dbReference type="EMBL" id="CP000923">
    <property type="protein sequence ID" value="ABY93563.1"/>
    <property type="molecule type" value="Genomic_DNA"/>
</dbReference>
<dbReference type="RefSeq" id="WP_009052704.1">
    <property type="nucleotide sequence ID" value="NC_010320.1"/>
</dbReference>
<dbReference type="SMR" id="B0K532"/>
<dbReference type="KEGG" id="tex:Teth514_2300"/>
<dbReference type="HOGENOM" id="CLU_014218_8_2_9"/>
<dbReference type="Proteomes" id="UP000002155">
    <property type="component" value="Chromosome"/>
</dbReference>
<dbReference type="GO" id="GO:0009376">
    <property type="term" value="C:HslUV protease complex"/>
    <property type="evidence" value="ECO:0007669"/>
    <property type="project" value="TreeGrafter"/>
</dbReference>
<dbReference type="GO" id="GO:0005524">
    <property type="term" value="F:ATP binding"/>
    <property type="evidence" value="ECO:0007669"/>
    <property type="project" value="UniProtKB-UniRule"/>
</dbReference>
<dbReference type="GO" id="GO:0016887">
    <property type="term" value="F:ATP hydrolysis activity"/>
    <property type="evidence" value="ECO:0007669"/>
    <property type="project" value="InterPro"/>
</dbReference>
<dbReference type="GO" id="GO:0140662">
    <property type="term" value="F:ATP-dependent protein folding chaperone"/>
    <property type="evidence" value="ECO:0007669"/>
    <property type="project" value="InterPro"/>
</dbReference>
<dbReference type="GO" id="GO:0046983">
    <property type="term" value="F:protein dimerization activity"/>
    <property type="evidence" value="ECO:0007669"/>
    <property type="project" value="InterPro"/>
</dbReference>
<dbReference type="GO" id="GO:0051082">
    <property type="term" value="F:unfolded protein binding"/>
    <property type="evidence" value="ECO:0007669"/>
    <property type="project" value="UniProtKB-UniRule"/>
</dbReference>
<dbReference type="GO" id="GO:0008270">
    <property type="term" value="F:zinc ion binding"/>
    <property type="evidence" value="ECO:0007669"/>
    <property type="project" value="InterPro"/>
</dbReference>
<dbReference type="GO" id="GO:0051301">
    <property type="term" value="P:cell division"/>
    <property type="evidence" value="ECO:0007669"/>
    <property type="project" value="TreeGrafter"/>
</dbReference>
<dbReference type="GO" id="GO:0051603">
    <property type="term" value="P:proteolysis involved in protein catabolic process"/>
    <property type="evidence" value="ECO:0007669"/>
    <property type="project" value="TreeGrafter"/>
</dbReference>
<dbReference type="CDD" id="cd19497">
    <property type="entry name" value="RecA-like_ClpX"/>
    <property type="match status" value="1"/>
</dbReference>
<dbReference type="FunFam" id="1.10.8.60:FF:000002">
    <property type="entry name" value="ATP-dependent Clp protease ATP-binding subunit ClpX"/>
    <property type="match status" value="1"/>
</dbReference>
<dbReference type="FunFam" id="3.40.50.300:FF:000005">
    <property type="entry name" value="ATP-dependent Clp protease ATP-binding subunit ClpX"/>
    <property type="match status" value="1"/>
</dbReference>
<dbReference type="Gene3D" id="1.10.8.60">
    <property type="match status" value="1"/>
</dbReference>
<dbReference type="Gene3D" id="6.20.220.10">
    <property type="entry name" value="ClpX chaperone, C4-type zinc finger domain"/>
    <property type="match status" value="1"/>
</dbReference>
<dbReference type="Gene3D" id="3.40.50.300">
    <property type="entry name" value="P-loop containing nucleotide triphosphate hydrolases"/>
    <property type="match status" value="1"/>
</dbReference>
<dbReference type="HAMAP" id="MF_00175">
    <property type="entry name" value="ClpX"/>
    <property type="match status" value="1"/>
</dbReference>
<dbReference type="InterPro" id="IPR003593">
    <property type="entry name" value="AAA+_ATPase"/>
</dbReference>
<dbReference type="InterPro" id="IPR050052">
    <property type="entry name" value="ATP-dep_Clp_protease_ClpX"/>
</dbReference>
<dbReference type="InterPro" id="IPR003959">
    <property type="entry name" value="ATPase_AAA_core"/>
</dbReference>
<dbReference type="InterPro" id="IPR019489">
    <property type="entry name" value="Clp_ATPase_C"/>
</dbReference>
<dbReference type="InterPro" id="IPR004487">
    <property type="entry name" value="Clp_protease_ATP-bd_su_ClpX"/>
</dbReference>
<dbReference type="InterPro" id="IPR046425">
    <property type="entry name" value="ClpX_bact"/>
</dbReference>
<dbReference type="InterPro" id="IPR027417">
    <property type="entry name" value="P-loop_NTPase"/>
</dbReference>
<dbReference type="InterPro" id="IPR010603">
    <property type="entry name" value="Znf_CppX_C4"/>
</dbReference>
<dbReference type="InterPro" id="IPR038366">
    <property type="entry name" value="Znf_CppX_C4_sf"/>
</dbReference>
<dbReference type="NCBIfam" id="TIGR00382">
    <property type="entry name" value="clpX"/>
    <property type="match status" value="1"/>
</dbReference>
<dbReference type="NCBIfam" id="NF003745">
    <property type="entry name" value="PRK05342.1"/>
    <property type="match status" value="1"/>
</dbReference>
<dbReference type="PANTHER" id="PTHR48102:SF7">
    <property type="entry name" value="ATP-DEPENDENT CLP PROTEASE ATP-BINDING SUBUNIT CLPX-LIKE, MITOCHONDRIAL"/>
    <property type="match status" value="1"/>
</dbReference>
<dbReference type="PANTHER" id="PTHR48102">
    <property type="entry name" value="ATP-DEPENDENT CLP PROTEASE ATP-BINDING SUBUNIT CLPX-LIKE, MITOCHONDRIAL-RELATED"/>
    <property type="match status" value="1"/>
</dbReference>
<dbReference type="Pfam" id="PF07724">
    <property type="entry name" value="AAA_2"/>
    <property type="match status" value="1"/>
</dbReference>
<dbReference type="Pfam" id="PF10431">
    <property type="entry name" value="ClpB_D2-small"/>
    <property type="match status" value="1"/>
</dbReference>
<dbReference type="Pfam" id="PF06689">
    <property type="entry name" value="zf-C4_ClpX"/>
    <property type="match status" value="1"/>
</dbReference>
<dbReference type="SMART" id="SM00382">
    <property type="entry name" value="AAA"/>
    <property type="match status" value="1"/>
</dbReference>
<dbReference type="SMART" id="SM01086">
    <property type="entry name" value="ClpB_D2-small"/>
    <property type="match status" value="1"/>
</dbReference>
<dbReference type="SMART" id="SM00994">
    <property type="entry name" value="zf-C4_ClpX"/>
    <property type="match status" value="1"/>
</dbReference>
<dbReference type="SUPFAM" id="SSF57716">
    <property type="entry name" value="Glucocorticoid receptor-like (DNA-binding domain)"/>
    <property type="match status" value="1"/>
</dbReference>
<dbReference type="SUPFAM" id="SSF52540">
    <property type="entry name" value="P-loop containing nucleoside triphosphate hydrolases"/>
    <property type="match status" value="1"/>
</dbReference>
<dbReference type="PROSITE" id="PS51902">
    <property type="entry name" value="CLPX_ZB"/>
    <property type="match status" value="1"/>
</dbReference>
<accession>B0K532</accession>